<comment type="function">
    <text evidence="1">Heme chaperone required for the biogenesis of c-type cytochromes. Transiently binds heme delivered by CcmC and transfers the heme to apo-cytochromes in a process facilitated by CcmF and CcmH.</text>
</comment>
<comment type="subcellular location">
    <subcellularLocation>
        <location evidence="1">Cell inner membrane</location>
        <topology evidence="1">Single-pass type II membrane protein</topology>
        <orientation evidence="1">Periplasmic side</orientation>
    </subcellularLocation>
</comment>
<comment type="similarity">
    <text evidence="1">Belongs to the CcmE/CycJ family.</text>
</comment>
<keyword id="KW-0997">Cell inner membrane</keyword>
<keyword id="KW-1003">Cell membrane</keyword>
<keyword id="KW-0201">Cytochrome c-type biogenesis</keyword>
<keyword id="KW-0349">Heme</keyword>
<keyword id="KW-0408">Iron</keyword>
<keyword id="KW-0472">Membrane</keyword>
<keyword id="KW-0479">Metal-binding</keyword>
<keyword id="KW-1185">Reference proteome</keyword>
<keyword id="KW-0735">Signal-anchor</keyword>
<keyword id="KW-0812">Transmembrane</keyword>
<keyword id="KW-1133">Transmembrane helix</keyword>
<protein>
    <recommendedName>
        <fullName evidence="1">Cytochrome c-type biogenesis protein CcmE</fullName>
    </recommendedName>
    <alternativeName>
        <fullName evidence="1">Cytochrome c maturation protein E</fullName>
    </alternativeName>
    <alternativeName>
        <fullName evidence="1">Heme chaperone CcmE</fullName>
    </alternativeName>
</protein>
<feature type="chain" id="PRO_0000238844" description="Cytochrome c-type biogenesis protein CcmE">
    <location>
        <begin position="1"/>
        <end position="166"/>
    </location>
</feature>
<feature type="topological domain" description="Cytoplasmic" evidence="1">
    <location>
        <begin position="1"/>
        <end position="8"/>
    </location>
</feature>
<feature type="transmembrane region" description="Helical; Signal-anchor for type II membrane protein" evidence="1">
    <location>
        <begin position="9"/>
        <end position="29"/>
    </location>
</feature>
<feature type="topological domain" description="Periplasmic" evidence="1">
    <location>
        <begin position="30"/>
        <end position="166"/>
    </location>
</feature>
<feature type="region of interest" description="Disordered" evidence="2">
    <location>
        <begin position="133"/>
        <end position="166"/>
    </location>
</feature>
<feature type="compositionally biased region" description="Polar residues" evidence="2">
    <location>
        <begin position="142"/>
        <end position="152"/>
    </location>
</feature>
<feature type="compositionally biased region" description="Basic and acidic residues" evidence="2">
    <location>
        <begin position="156"/>
        <end position="166"/>
    </location>
</feature>
<feature type="binding site" description="covalent" evidence="1">
    <location>
        <position position="124"/>
    </location>
    <ligand>
        <name>heme</name>
        <dbReference type="ChEBI" id="CHEBI:30413"/>
    </ligand>
</feature>
<feature type="binding site" description="axial binding residue" evidence="1">
    <location>
        <position position="128"/>
    </location>
    <ligand>
        <name>heme</name>
        <dbReference type="ChEBI" id="CHEBI:30413"/>
    </ligand>
    <ligandPart>
        <name>Fe</name>
        <dbReference type="ChEBI" id="CHEBI:18248"/>
    </ligandPart>
</feature>
<dbReference type="EMBL" id="CP000082">
    <property type="protein sequence ID" value="AAZ19673.1"/>
    <property type="molecule type" value="Genomic_DNA"/>
</dbReference>
<dbReference type="RefSeq" id="WP_011281084.1">
    <property type="nucleotide sequence ID" value="NC_007204.1"/>
</dbReference>
<dbReference type="SMR" id="Q4FQN5"/>
<dbReference type="STRING" id="259536.Psyc_1825"/>
<dbReference type="KEGG" id="par:Psyc_1825"/>
<dbReference type="eggNOG" id="COG2332">
    <property type="taxonomic scope" value="Bacteria"/>
</dbReference>
<dbReference type="HOGENOM" id="CLU_079503_1_1_6"/>
<dbReference type="OrthoDB" id="9793584at2"/>
<dbReference type="Proteomes" id="UP000000546">
    <property type="component" value="Chromosome"/>
</dbReference>
<dbReference type="GO" id="GO:0005886">
    <property type="term" value="C:plasma membrane"/>
    <property type="evidence" value="ECO:0007669"/>
    <property type="project" value="UniProtKB-SubCell"/>
</dbReference>
<dbReference type="GO" id="GO:0020037">
    <property type="term" value="F:heme binding"/>
    <property type="evidence" value="ECO:0007669"/>
    <property type="project" value="InterPro"/>
</dbReference>
<dbReference type="GO" id="GO:0046872">
    <property type="term" value="F:metal ion binding"/>
    <property type="evidence" value="ECO:0007669"/>
    <property type="project" value="UniProtKB-KW"/>
</dbReference>
<dbReference type="GO" id="GO:0017004">
    <property type="term" value="P:cytochrome complex assembly"/>
    <property type="evidence" value="ECO:0007669"/>
    <property type="project" value="UniProtKB-KW"/>
</dbReference>
<dbReference type="Gene3D" id="2.40.50.140">
    <property type="entry name" value="Nucleic acid-binding proteins"/>
    <property type="match status" value="1"/>
</dbReference>
<dbReference type="HAMAP" id="MF_01959">
    <property type="entry name" value="CcmE"/>
    <property type="match status" value="1"/>
</dbReference>
<dbReference type="InterPro" id="IPR004329">
    <property type="entry name" value="CcmE"/>
</dbReference>
<dbReference type="InterPro" id="IPR036127">
    <property type="entry name" value="CcmE-like_sf"/>
</dbReference>
<dbReference type="InterPro" id="IPR012340">
    <property type="entry name" value="NA-bd_OB-fold"/>
</dbReference>
<dbReference type="NCBIfam" id="NF009727">
    <property type="entry name" value="PRK13254.1-1"/>
    <property type="match status" value="1"/>
</dbReference>
<dbReference type="NCBIfam" id="NF009729">
    <property type="entry name" value="PRK13254.1-3"/>
    <property type="match status" value="1"/>
</dbReference>
<dbReference type="PANTHER" id="PTHR34128">
    <property type="entry name" value="CYTOCHROME C-TYPE BIOGENESIS PROTEIN CCME HOMOLOG, MITOCHONDRIAL"/>
    <property type="match status" value="1"/>
</dbReference>
<dbReference type="PANTHER" id="PTHR34128:SF2">
    <property type="entry name" value="CYTOCHROME C-TYPE BIOGENESIS PROTEIN CCME HOMOLOG, MITOCHONDRIAL"/>
    <property type="match status" value="1"/>
</dbReference>
<dbReference type="Pfam" id="PF03100">
    <property type="entry name" value="CcmE"/>
    <property type="match status" value="1"/>
</dbReference>
<dbReference type="SUPFAM" id="SSF82093">
    <property type="entry name" value="Heme chaperone CcmE"/>
    <property type="match status" value="1"/>
</dbReference>
<sequence length="166" mass="18037">MNAVRRKKLMWVMFTLAGAVIAVALVIYAIGKQTDYYFDATAIAQGEAPQDKRIRAGGMVVAGSVQRAPNDPLSVEFAITDFQSTVPVTYQGILPDLFAENSGVVATGKMQGDIFVAGEVLAKHDENYMPPEVAKSMKENNRSGAVPSSEQYNPAEKLHETKTLQQ</sequence>
<reference key="1">
    <citation type="journal article" date="2010" name="Appl. Environ. Microbiol.">
        <title>The genome sequence of Psychrobacter arcticus 273-4, a psychroactive Siberian permafrost bacterium, reveals mechanisms for adaptation to low-temperature growth.</title>
        <authorList>
            <person name="Ayala-del-Rio H.L."/>
            <person name="Chain P.S."/>
            <person name="Grzymski J.J."/>
            <person name="Ponder M.A."/>
            <person name="Ivanova N."/>
            <person name="Bergholz P.W."/>
            <person name="Di Bartolo G."/>
            <person name="Hauser L."/>
            <person name="Land M."/>
            <person name="Bakermans C."/>
            <person name="Rodrigues D."/>
            <person name="Klappenbach J."/>
            <person name="Zarka D."/>
            <person name="Larimer F."/>
            <person name="Richardson P."/>
            <person name="Murray A."/>
            <person name="Thomashow M."/>
            <person name="Tiedje J.M."/>
        </authorList>
    </citation>
    <scope>NUCLEOTIDE SEQUENCE [LARGE SCALE GENOMIC DNA]</scope>
    <source>
        <strain>DSM 17307 / VKM B-2377 / 273-4</strain>
    </source>
</reference>
<organism>
    <name type="scientific">Psychrobacter arcticus (strain DSM 17307 / VKM B-2377 / 273-4)</name>
    <dbReference type="NCBI Taxonomy" id="259536"/>
    <lineage>
        <taxon>Bacteria</taxon>
        <taxon>Pseudomonadati</taxon>
        <taxon>Pseudomonadota</taxon>
        <taxon>Gammaproteobacteria</taxon>
        <taxon>Moraxellales</taxon>
        <taxon>Moraxellaceae</taxon>
        <taxon>Psychrobacter</taxon>
    </lineage>
</organism>
<name>CCME_PSYA2</name>
<proteinExistence type="inferred from homology"/>
<gene>
    <name evidence="1" type="primary">ccmE</name>
    <name evidence="1" type="synonym">cycJ</name>
    <name type="ordered locus">Psyc_1825</name>
</gene>
<accession>Q4FQN5</accession>
<evidence type="ECO:0000255" key="1">
    <source>
        <dbReference type="HAMAP-Rule" id="MF_01959"/>
    </source>
</evidence>
<evidence type="ECO:0000256" key="2">
    <source>
        <dbReference type="SAM" id="MobiDB-lite"/>
    </source>
</evidence>